<keyword id="KW-0963">Cytoplasm</keyword>
<keyword id="KW-0648">Protein biosynthesis</keyword>
<keyword id="KW-1185">Reference proteome</keyword>
<proteinExistence type="inferred from homology"/>
<gene>
    <name evidence="1" type="primary">frr</name>
    <name type="ordered locus">cauri_1559</name>
</gene>
<comment type="function">
    <text evidence="1">Responsible for the release of ribosomes from messenger RNA at the termination of protein biosynthesis. May increase the efficiency of translation by recycling ribosomes from one round of translation to another.</text>
</comment>
<comment type="subcellular location">
    <subcellularLocation>
        <location evidence="1">Cytoplasm</location>
    </subcellularLocation>
</comment>
<comment type="similarity">
    <text evidence="1">Belongs to the RRF family.</text>
</comment>
<feature type="chain" id="PRO_1000194916" description="Ribosome-recycling factor">
    <location>
        <begin position="1"/>
        <end position="185"/>
    </location>
</feature>
<reference key="1">
    <citation type="journal article" date="2010" name="BMC Genomics">
        <title>Complete genome sequence and lifestyle of black-pigmented Corynebacterium aurimucosum ATCC 700975 (formerly C. nigricans CN-1) isolated from a vaginal swab of a woman with spontaneous abortion.</title>
        <authorList>
            <person name="Trost E."/>
            <person name="Gotker S."/>
            <person name="Schneider J."/>
            <person name="Schneiker-Bekel S."/>
            <person name="Szczepanowski R."/>
            <person name="Tilker A."/>
            <person name="Viehoever P."/>
            <person name="Arnold W."/>
            <person name="Bekel T."/>
            <person name="Blom J."/>
            <person name="Gartemann K.H."/>
            <person name="Linke B."/>
            <person name="Goesmann A."/>
            <person name="Puhler A."/>
            <person name="Shukla S.K."/>
            <person name="Tauch A."/>
        </authorList>
    </citation>
    <scope>NUCLEOTIDE SEQUENCE [LARGE SCALE GENOMIC DNA]</scope>
    <source>
        <strain>ATCC 700975 / DSM 44827 / CIP 107346 / CN-1</strain>
    </source>
</reference>
<dbReference type="EMBL" id="CP001601">
    <property type="protein sequence ID" value="ACP33152.1"/>
    <property type="molecule type" value="Genomic_DNA"/>
</dbReference>
<dbReference type="RefSeq" id="WP_010190379.1">
    <property type="nucleotide sequence ID" value="NZ_ACLH01000084.1"/>
</dbReference>
<dbReference type="SMR" id="C3PH48"/>
<dbReference type="STRING" id="548476.cauri_1559"/>
<dbReference type="GeneID" id="31924189"/>
<dbReference type="KEGG" id="car:cauri_1559"/>
<dbReference type="eggNOG" id="COG0233">
    <property type="taxonomic scope" value="Bacteria"/>
</dbReference>
<dbReference type="HOGENOM" id="CLU_073981_2_0_11"/>
<dbReference type="OrthoDB" id="9804006at2"/>
<dbReference type="Proteomes" id="UP000002077">
    <property type="component" value="Chromosome"/>
</dbReference>
<dbReference type="GO" id="GO:0005737">
    <property type="term" value="C:cytoplasm"/>
    <property type="evidence" value="ECO:0007669"/>
    <property type="project" value="UniProtKB-SubCell"/>
</dbReference>
<dbReference type="GO" id="GO:0043023">
    <property type="term" value="F:ribosomal large subunit binding"/>
    <property type="evidence" value="ECO:0007669"/>
    <property type="project" value="TreeGrafter"/>
</dbReference>
<dbReference type="GO" id="GO:0006415">
    <property type="term" value="P:translational termination"/>
    <property type="evidence" value="ECO:0007669"/>
    <property type="project" value="UniProtKB-UniRule"/>
</dbReference>
<dbReference type="CDD" id="cd00520">
    <property type="entry name" value="RRF"/>
    <property type="match status" value="1"/>
</dbReference>
<dbReference type="FunFam" id="1.10.132.20:FF:000001">
    <property type="entry name" value="Ribosome-recycling factor"/>
    <property type="match status" value="1"/>
</dbReference>
<dbReference type="FunFam" id="3.30.1360.40:FF:000001">
    <property type="entry name" value="Ribosome-recycling factor"/>
    <property type="match status" value="1"/>
</dbReference>
<dbReference type="Gene3D" id="3.30.1360.40">
    <property type="match status" value="1"/>
</dbReference>
<dbReference type="Gene3D" id="1.10.132.20">
    <property type="entry name" value="Ribosome-recycling factor"/>
    <property type="match status" value="1"/>
</dbReference>
<dbReference type="HAMAP" id="MF_00040">
    <property type="entry name" value="RRF"/>
    <property type="match status" value="1"/>
</dbReference>
<dbReference type="InterPro" id="IPR002661">
    <property type="entry name" value="Ribosome_recyc_fac"/>
</dbReference>
<dbReference type="InterPro" id="IPR023584">
    <property type="entry name" value="Ribosome_recyc_fac_dom"/>
</dbReference>
<dbReference type="InterPro" id="IPR036191">
    <property type="entry name" value="RRF_sf"/>
</dbReference>
<dbReference type="NCBIfam" id="TIGR00496">
    <property type="entry name" value="frr"/>
    <property type="match status" value="1"/>
</dbReference>
<dbReference type="PANTHER" id="PTHR20982:SF3">
    <property type="entry name" value="MITOCHONDRIAL RIBOSOME RECYCLING FACTOR PSEUDO 1"/>
    <property type="match status" value="1"/>
</dbReference>
<dbReference type="PANTHER" id="PTHR20982">
    <property type="entry name" value="RIBOSOME RECYCLING FACTOR"/>
    <property type="match status" value="1"/>
</dbReference>
<dbReference type="Pfam" id="PF01765">
    <property type="entry name" value="RRF"/>
    <property type="match status" value="1"/>
</dbReference>
<dbReference type="SUPFAM" id="SSF55194">
    <property type="entry name" value="Ribosome recycling factor, RRF"/>
    <property type="match status" value="1"/>
</dbReference>
<evidence type="ECO:0000255" key="1">
    <source>
        <dbReference type="HAMAP-Rule" id="MF_00040"/>
    </source>
</evidence>
<sequence>MIDEIQLEAEEHMTASVEHTREQLLTIRTGRANPAMFNGLVAEYYGVPTPITQMATISVPEPRMLLIKPYEQSVMNEIENAIRNSDLGVNPTNDGQVLRVTIPQLTEERRRDMVKMAKSKGEDGKIAIRNIRRRAMEQLKKLQKDGDAGEDEVIAAEKEMEKITSGYIEQVDKLVANKEEELMEV</sequence>
<accession>C3PH48</accession>
<name>RRF_CORA7</name>
<protein>
    <recommendedName>
        <fullName evidence="1">Ribosome-recycling factor</fullName>
        <shortName evidence="1">RRF</shortName>
    </recommendedName>
    <alternativeName>
        <fullName evidence="1">Ribosome-releasing factor</fullName>
    </alternativeName>
</protein>
<organism>
    <name type="scientific">Corynebacterium aurimucosum (strain ATCC 700975 / DSM 44827 / CIP 107346 / CN-1)</name>
    <name type="common">Corynebacterium nigricans</name>
    <dbReference type="NCBI Taxonomy" id="548476"/>
    <lineage>
        <taxon>Bacteria</taxon>
        <taxon>Bacillati</taxon>
        <taxon>Actinomycetota</taxon>
        <taxon>Actinomycetes</taxon>
        <taxon>Mycobacteriales</taxon>
        <taxon>Corynebacteriaceae</taxon>
        <taxon>Corynebacterium</taxon>
    </lineage>
</organism>